<organism>
    <name type="scientific">Macaca fascicularis</name>
    <name type="common">Crab-eating macaque</name>
    <name type="synonym">Cynomolgus monkey</name>
    <dbReference type="NCBI Taxonomy" id="9541"/>
    <lineage>
        <taxon>Eukaryota</taxon>
        <taxon>Metazoa</taxon>
        <taxon>Chordata</taxon>
        <taxon>Craniata</taxon>
        <taxon>Vertebrata</taxon>
        <taxon>Euteleostomi</taxon>
        <taxon>Mammalia</taxon>
        <taxon>Eutheria</taxon>
        <taxon>Euarchontoglires</taxon>
        <taxon>Primates</taxon>
        <taxon>Haplorrhini</taxon>
        <taxon>Catarrhini</taxon>
        <taxon>Cercopithecidae</taxon>
        <taxon>Cercopithecinae</taxon>
        <taxon>Macaca</taxon>
    </lineage>
</organism>
<protein>
    <recommendedName>
        <fullName evidence="6">E3 UFM1-protein ligase 1</fullName>
        <ecNumber evidence="2">2.3.2.-</ecNumber>
    </recommendedName>
    <alternativeName>
        <fullName evidence="6">E3 UFM1-protein transferase 1</fullName>
    </alternativeName>
</protein>
<comment type="function">
    <text evidence="2 3">E3 protein ligase that mediates ufmylation, the covalent attachment of the ubiquitin-like modifier UFM1 to lysine residues on target proteins, and which plays a key role in various processes, such as ribosome recycling, response to DNA damage, interferon response or reticulophagy (also called ER-phagy). Catalyzes ufmylation of many protein, such as CD274/PD-L1, CDK5RAP3, CYB5R3, DDRGK1, EIF6, histone H4, MRE11, P4HB, PDCD1/PD-1, TRIP4, RPN1, RPS20/uS10, RPL10/uL16, RPL26/uL24, SYVN1/HRD1 and TP53/p53. As part of the UREL complex, plays a key role in ribosome recycling by catalyzing mono-ufmylation of RPL26/uL24 subunit of the 60S ribosome. Ufmylation of RPL26/uL24 occurs on free 60S ribosomes following ribosome dissociation: it weakens the junction between post-termination 60S subunits and SEC61 translocons, promoting release and recycling of the large ribosomal subunit from the endoplasmic reticulum membrane. Ufmylation of RPL26/uL24 and subsequent 60S ribosome recycling either take place after normal termination of translation or after ribosome stalling during cotranslational translocation at the endoplasmic reticulum. Involved in reticulophagy in response to endoplasmic reticulum stress by mediating ufmylation of proteins such as CYB5R3 and RPN1, thereby promoting lysosomal degradation of ufmylated proteins. Ufmylation in response to endoplasmic reticulum stress is essential for processes such as hematopoiesis, blood vessel morphogenesis or inflammatory response. Mediates ufmylation of DDRGK1 and CDK5RAP3; the role of these modifications is however unclear: as both DDRGK1 and CDK5RAP3 act as substrate adapters for ufmylation, it is uncertain whether ufmylation of these proteins is, a collateral effect or is required for ufmylation. Acts as a negative regulator of T-cell activation by mediating ufmylation and stabilization of PDCD1/PD-1. Also involved in the response to DNA damage: recruited to double-strand break sites following DNA damage and mediates monoufmylation of histone H4 and ufmylation of MRE11. Mediates ufmylation of TP53/p53, promoting its stability. Catalyzes ufmylation of TRIP4, thereby playing a role in nuclear receptor-mediated transcription (By similarity). Required for hematopoietic stem cell function and hematopoiesis (By similarity).</text>
</comment>
<comment type="subunit">
    <text evidence="2">Catalytic component of the UFM1 ribosome E3 ligase (UREL) complex, composed of UFL1, DDRGK1 and CDK5RAP3. Interacts with E2-like enzyme UFC1. Interacts with RELA. Interacts with NBN; promoting recruitment to double-strand breaks following DNA damage. Interacts (when phosphorylated) with YWHAG/14-3-3-gamma; sequestering UFL1 and preventing its association with PDCD1/PD-1 substrate.</text>
</comment>
<comment type="subcellular location">
    <subcellularLocation>
        <location evidence="2">Endoplasmic reticulum membrane</location>
    </subcellularLocation>
    <subcellularLocation>
        <location evidence="2">Cytoplasm</location>
        <location evidence="2">Cytosol</location>
    </subcellularLocation>
    <subcellularLocation>
        <location evidence="2">Nucleus</location>
    </subcellularLocation>
    <subcellularLocation>
        <location evidence="2">Chromosome</location>
    </subcellularLocation>
    <text evidence="2">Recruited to double-strand breaks by the MRE11-RAD50-NBN (MRN) complex following DNA damage.</text>
</comment>
<comment type="PTM">
    <text evidence="2">Ubiquitinated, leading to its degradation by the proteasome. Interaction with CDK5RAP3 protects both proteins against ubiquitination and degradation via the proteasome.</text>
</comment>
<comment type="PTM">
    <text evidence="2">Phosphorylation at Thr-536 by AMPK promotes its interaction with YWHAG/14-3-3-gamma, thereby preventing UFL1 association with PDCD1/PD-1 substrate.</text>
</comment>
<comment type="similarity">
    <text evidence="6">Belongs to the UFL1 family.</text>
</comment>
<reference key="1">
    <citation type="submission" date="2005-06" db="EMBL/GenBank/DDBJ databases">
        <title>DNA sequences of macaque genes expressed in brain or testis and its evolutionary implications.</title>
        <authorList>
            <consortium name="International consortium for macaque cDNA sequencing and analysis"/>
        </authorList>
    </citation>
    <scope>NUCLEOTIDE SEQUENCE [LARGE SCALE MRNA]</scope>
    <source>
        <tissue>Testis</tissue>
    </source>
</reference>
<dbReference type="EC" id="2.3.2.-" evidence="2"/>
<dbReference type="EMBL" id="AB179400">
    <property type="protein sequence ID" value="BAE02451.1"/>
    <property type="molecule type" value="mRNA"/>
</dbReference>
<dbReference type="RefSeq" id="NP_001270418.1">
    <property type="nucleotide sequence ID" value="NM_001283489.1"/>
</dbReference>
<dbReference type="SMR" id="Q4R367"/>
<dbReference type="STRING" id="9541.ENSMFAP00000038219"/>
<dbReference type="eggNOG" id="KOG2235">
    <property type="taxonomic scope" value="Eukaryota"/>
</dbReference>
<dbReference type="OrthoDB" id="10258297at2759"/>
<dbReference type="Proteomes" id="UP000233100">
    <property type="component" value="Unplaced"/>
</dbReference>
<dbReference type="GO" id="GO:0005737">
    <property type="term" value="C:cytoplasm"/>
    <property type="evidence" value="ECO:0000250"/>
    <property type="project" value="UniProtKB"/>
</dbReference>
<dbReference type="GO" id="GO:0005829">
    <property type="term" value="C:cytosol"/>
    <property type="evidence" value="ECO:0007669"/>
    <property type="project" value="UniProtKB-SubCell"/>
</dbReference>
<dbReference type="GO" id="GO:0005783">
    <property type="term" value="C:endoplasmic reticulum"/>
    <property type="evidence" value="ECO:0000250"/>
    <property type="project" value="UniProtKB"/>
</dbReference>
<dbReference type="GO" id="GO:0005789">
    <property type="term" value="C:endoplasmic reticulum membrane"/>
    <property type="evidence" value="ECO:0000250"/>
    <property type="project" value="UniProtKB"/>
</dbReference>
<dbReference type="GO" id="GO:0005634">
    <property type="term" value="C:nucleus"/>
    <property type="evidence" value="ECO:0000250"/>
    <property type="project" value="UniProtKB"/>
</dbReference>
<dbReference type="GO" id="GO:0035861">
    <property type="term" value="C:site of double-strand break"/>
    <property type="evidence" value="ECO:0000250"/>
    <property type="project" value="UniProtKB"/>
</dbReference>
<dbReference type="GO" id="GO:0061666">
    <property type="term" value="F:UFM1 ligase activity"/>
    <property type="evidence" value="ECO:0000250"/>
    <property type="project" value="UniProtKB"/>
</dbReference>
<dbReference type="GO" id="GO:0000077">
    <property type="term" value="P:DNA damage checkpoint signaling"/>
    <property type="evidence" value="ECO:0000250"/>
    <property type="project" value="UniProtKB"/>
</dbReference>
<dbReference type="GO" id="GO:0006974">
    <property type="term" value="P:DNA damage response"/>
    <property type="evidence" value="ECO:0000250"/>
    <property type="project" value="UniProtKB"/>
</dbReference>
<dbReference type="GO" id="GO:0006281">
    <property type="term" value="P:DNA repair"/>
    <property type="evidence" value="ECO:0007669"/>
    <property type="project" value="UniProtKB-KW"/>
</dbReference>
<dbReference type="GO" id="GO:0030218">
    <property type="term" value="P:erythrocyte differentiation"/>
    <property type="evidence" value="ECO:0000250"/>
    <property type="project" value="UniProtKB"/>
</dbReference>
<dbReference type="GO" id="GO:0060218">
    <property type="term" value="P:hematopoietic stem cell differentiation"/>
    <property type="evidence" value="ECO:0000250"/>
    <property type="project" value="UniProtKB"/>
</dbReference>
<dbReference type="GO" id="GO:1903895">
    <property type="term" value="P:negative regulation of IRE1-mediated unfolded protein response"/>
    <property type="evidence" value="ECO:0000250"/>
    <property type="project" value="UniProtKB"/>
</dbReference>
<dbReference type="GO" id="GO:0032088">
    <property type="term" value="P:negative regulation of NF-kappaB transcription factor activity"/>
    <property type="evidence" value="ECO:0000250"/>
    <property type="project" value="UniProtKB"/>
</dbReference>
<dbReference type="GO" id="GO:0031397">
    <property type="term" value="P:negative regulation of protein ubiquitination"/>
    <property type="evidence" value="ECO:0000250"/>
    <property type="project" value="UniProtKB"/>
</dbReference>
<dbReference type="GO" id="GO:0050868">
    <property type="term" value="P:negative regulation of T cell activation"/>
    <property type="evidence" value="ECO:0000250"/>
    <property type="project" value="UniProtKB"/>
</dbReference>
<dbReference type="GO" id="GO:0002841">
    <property type="term" value="P:negative regulation of T cell mediated immune response to tumor cell"/>
    <property type="evidence" value="ECO:0000250"/>
    <property type="project" value="UniProtKB"/>
</dbReference>
<dbReference type="GO" id="GO:0010508">
    <property type="term" value="P:positive regulation of autophagy"/>
    <property type="evidence" value="ECO:0000250"/>
    <property type="project" value="UniProtKB"/>
</dbReference>
<dbReference type="GO" id="GO:0140501">
    <property type="term" value="P:positive regulation of reticulophagy"/>
    <property type="evidence" value="ECO:0000250"/>
    <property type="project" value="UniProtKB"/>
</dbReference>
<dbReference type="GO" id="GO:1990592">
    <property type="term" value="P:protein K69-linked ufmylation"/>
    <property type="evidence" value="ECO:0000250"/>
    <property type="project" value="UniProtKB"/>
</dbReference>
<dbReference type="GO" id="GO:0071569">
    <property type="term" value="P:protein ufmylation"/>
    <property type="evidence" value="ECO:0000250"/>
    <property type="project" value="UniProtKB"/>
</dbReference>
<dbReference type="GO" id="GO:0043122">
    <property type="term" value="P:regulation of canonical NF-kappaB signal transduction"/>
    <property type="evidence" value="ECO:0000250"/>
    <property type="project" value="UniProtKB"/>
</dbReference>
<dbReference type="GO" id="GO:0050727">
    <property type="term" value="P:regulation of inflammatory response"/>
    <property type="evidence" value="ECO:0000250"/>
    <property type="project" value="UniProtKB"/>
</dbReference>
<dbReference type="GO" id="GO:0033146">
    <property type="term" value="P:regulation of intracellular estrogen receptor signaling pathway"/>
    <property type="evidence" value="ECO:0000250"/>
    <property type="project" value="UniProtKB"/>
</dbReference>
<dbReference type="GO" id="GO:0032434">
    <property type="term" value="P:regulation of proteasomal ubiquitin-dependent protein catabolic process"/>
    <property type="evidence" value="ECO:0007669"/>
    <property type="project" value="TreeGrafter"/>
</dbReference>
<dbReference type="GO" id="GO:0072344">
    <property type="term" value="P:rescue of stalled ribosome"/>
    <property type="evidence" value="ECO:0000250"/>
    <property type="project" value="UniProtKB"/>
</dbReference>
<dbReference type="GO" id="GO:0034976">
    <property type="term" value="P:response to endoplasmic reticulum stress"/>
    <property type="evidence" value="ECO:0000250"/>
    <property type="project" value="UniProtKB"/>
</dbReference>
<dbReference type="GO" id="GO:0061709">
    <property type="term" value="P:reticulophagy"/>
    <property type="evidence" value="ECO:0000250"/>
    <property type="project" value="UniProtKB"/>
</dbReference>
<dbReference type="GO" id="GO:0032790">
    <property type="term" value="P:ribosome disassembly"/>
    <property type="evidence" value="ECO:0000250"/>
    <property type="project" value="UniProtKB"/>
</dbReference>
<dbReference type="InterPro" id="IPR018611">
    <property type="entry name" value="Ufl1"/>
</dbReference>
<dbReference type="InterPro" id="IPR056761">
    <property type="entry name" value="Ufl1-like_C"/>
</dbReference>
<dbReference type="InterPro" id="IPR056580">
    <property type="entry name" value="Ufl1_dom"/>
</dbReference>
<dbReference type="InterPro" id="IPR056579">
    <property type="entry name" value="Ufl1_N"/>
</dbReference>
<dbReference type="PANTHER" id="PTHR31057">
    <property type="entry name" value="E3 UFM1-PROTEIN LIGASE 1"/>
    <property type="match status" value="1"/>
</dbReference>
<dbReference type="PANTHER" id="PTHR31057:SF0">
    <property type="entry name" value="E3 UFM1-PROTEIN LIGASE 1"/>
    <property type="match status" value="1"/>
</dbReference>
<dbReference type="Pfam" id="PF09743">
    <property type="entry name" value="E3_UFM1_ligase"/>
    <property type="match status" value="1"/>
</dbReference>
<dbReference type="Pfam" id="PF23659">
    <property type="entry name" value="UFL1"/>
    <property type="match status" value="1"/>
</dbReference>
<dbReference type="Pfam" id="PF25041">
    <property type="entry name" value="UFL1_C"/>
    <property type="match status" value="1"/>
</dbReference>
<gene>
    <name evidence="2" type="primary">UFL1</name>
    <name evidence="5" type="ORF">QtsA-19276</name>
</gene>
<feature type="initiator methionine" description="Removed" evidence="2">
    <location>
        <position position="1"/>
    </location>
</feature>
<feature type="chain" id="PRO_0000328123" description="E3 UFM1-protein ligase 1">
    <location>
        <begin position="2"/>
        <end position="793"/>
    </location>
</feature>
<feature type="region of interest" description="Required for E3 UFM1-protein ligase activity" evidence="2">
    <location>
        <begin position="2"/>
        <end position="212"/>
    </location>
</feature>
<feature type="region of interest" description="Mediates interaction with DDRGK1" evidence="2">
    <location>
        <begin position="2"/>
        <end position="200"/>
    </location>
</feature>
<feature type="region of interest" description="Involved in CDK5RAP3-binding" evidence="2">
    <location>
        <begin position="121"/>
        <end position="250"/>
    </location>
</feature>
<feature type="region of interest" description="Mediates interaction with TRIP4" evidence="2">
    <location>
        <begin position="200"/>
        <end position="400"/>
    </location>
</feature>
<feature type="region of interest" description="Disordered" evidence="4">
    <location>
        <begin position="407"/>
        <end position="473"/>
    </location>
</feature>
<feature type="region of interest" description="Mediates interaction with CDK5RAP3" evidence="1">
    <location>
        <begin position="490"/>
        <end position="684"/>
    </location>
</feature>
<feature type="modified residue" description="N-acetylalanine" evidence="2">
    <location>
        <position position="2"/>
    </location>
</feature>
<feature type="modified residue" description="Omega-N-methylarginine" evidence="3">
    <location>
        <position position="433"/>
    </location>
</feature>
<feature type="modified residue" description="Phosphoserine" evidence="2">
    <location>
        <position position="458"/>
    </location>
</feature>
<feature type="modified residue" description="Phosphothreonine" evidence="2">
    <location>
        <position position="536"/>
    </location>
</feature>
<keyword id="KW-0007">Acetylation</keyword>
<keyword id="KW-0158">Chromosome</keyword>
<keyword id="KW-0963">Cytoplasm</keyword>
<keyword id="KW-0227">DNA damage</keyword>
<keyword id="KW-0234">DNA repair</keyword>
<keyword id="KW-0256">Endoplasmic reticulum</keyword>
<keyword id="KW-0472">Membrane</keyword>
<keyword id="KW-0488">Methylation</keyword>
<keyword id="KW-0539">Nucleus</keyword>
<keyword id="KW-0597">Phosphoprotein</keyword>
<keyword id="KW-1185">Reference proteome</keyword>
<keyword id="KW-0808">Transferase</keyword>
<keyword id="KW-0832">Ubl conjugation</keyword>
<keyword id="KW-0833">Ubl conjugation pathway</keyword>
<proteinExistence type="evidence at transcript level"/>
<name>UFL1_MACFA</name>
<sequence>MADAWEEIRRLAADFQRAQFAEATQRLSERNCIEIVNKLIAQKQLEVVHTLDGKEYITPAQISKEMRDELHVRGGRVNIVDLQQVINVDLIHIENRIGDIIKSEKHVQLVLGQLIDENYLDRLAEEVNDKLQESGQVTISELCKTYDLPGNFLTQALTQRLGRIISGHIDLDNRGVIFTEAFVARHKARIRGLFSAITRPTAVNSLISKYGFQEQLLYSVLEELVNSGRLRGTVVGGRQDKAVFVPDIYSRTQSTWVDSFFRQNGYLEFDALSRLGIPDAVSYIKKRYKTTQLLFLKAACVGQGLVDQVEASVEEAISSGTWVDIAPLLPTSLSVEDAAILLQQVMRAFSKQASAVVFSDTVVVSEKFINDCTELFRELMHQKAEKEMKNNPVHLITEEDLKQISTLESVSTSKKDKKDERRRKATEGSGSVRGGGGGNAREYKIRKVKKKGRKDDDSDDETQSSHTGKKKPEISFMFQDEIEDFLRKHIQDAPEEFISELAEYLIKPLNKTYLEVVRSVFMSSTTSASGTGRKRTIKDLQEEVSNLYNNIRLFEKGMKFFADDTQAALTKHLLKSVCTDITNLIFNFLASDLMMAVDDPAAITSEIRKKILSKLSEETKVALTKLHNSLNEKSIEDFISCLDSAAEACDIMVKRGDKKRERQILFQHRQALAEQLKVTEDPALILHLTSVLLFQFSTHTMLHAPGRCVPQIIAFLNSKIPEDQHALLVKYQGLVVKQLVSQNKKTGQGDYPLNNELGKEQEDVANTRKELQELSSSIKDLVLKSRKSSVTEE</sequence>
<evidence type="ECO:0000250" key="1">
    <source>
        <dbReference type="UniProtKB" id="B2GV24"/>
    </source>
</evidence>
<evidence type="ECO:0000250" key="2">
    <source>
        <dbReference type="UniProtKB" id="O94874"/>
    </source>
</evidence>
<evidence type="ECO:0000250" key="3">
    <source>
        <dbReference type="UniProtKB" id="Q8CCJ3"/>
    </source>
</evidence>
<evidence type="ECO:0000256" key="4">
    <source>
        <dbReference type="SAM" id="MobiDB-lite"/>
    </source>
</evidence>
<evidence type="ECO:0000303" key="5">
    <source ref="1"/>
</evidence>
<evidence type="ECO:0000305" key="6"/>
<accession>Q4R367</accession>